<accession>P14712</accession>
<accession>B3H6K9</accession>
<organism>
    <name type="scientific">Arabidopsis thaliana</name>
    <name type="common">Mouse-ear cress</name>
    <dbReference type="NCBI Taxonomy" id="3702"/>
    <lineage>
        <taxon>Eukaryota</taxon>
        <taxon>Viridiplantae</taxon>
        <taxon>Streptophyta</taxon>
        <taxon>Embryophyta</taxon>
        <taxon>Tracheophyta</taxon>
        <taxon>Spermatophyta</taxon>
        <taxon>Magnoliopsida</taxon>
        <taxon>eudicotyledons</taxon>
        <taxon>Gunneridae</taxon>
        <taxon>Pentapetalae</taxon>
        <taxon>rosids</taxon>
        <taxon>malvids</taxon>
        <taxon>Brassicales</taxon>
        <taxon>Brassicaceae</taxon>
        <taxon>Camelineae</taxon>
        <taxon>Arabidopsis</taxon>
    </lineage>
</organism>
<evidence type="ECO:0000250" key="1"/>
<evidence type="ECO:0000255" key="2"/>
<evidence type="ECO:0000255" key="3">
    <source>
        <dbReference type="PROSITE-ProRule" id="PRU00107"/>
    </source>
</evidence>
<evidence type="ECO:0000255" key="4">
    <source>
        <dbReference type="PROSITE-ProRule" id="PRU00140"/>
    </source>
</evidence>
<evidence type="ECO:0000255" key="5">
    <source>
        <dbReference type="PROSITE-ProRule" id="PRU00141"/>
    </source>
</evidence>
<evidence type="ECO:0000256" key="6">
    <source>
        <dbReference type="SAM" id="MobiDB-lite"/>
    </source>
</evidence>
<evidence type="ECO:0000269" key="7">
    <source>
    </source>
</evidence>
<evidence type="ECO:0000269" key="8">
    <source>
    </source>
</evidence>
<evidence type="ECO:0000269" key="9">
    <source>
    </source>
</evidence>
<evidence type="ECO:0000269" key="10">
    <source>
    </source>
</evidence>
<evidence type="ECO:0000269" key="11">
    <source>
    </source>
</evidence>
<evidence type="ECO:0000269" key="12">
    <source>
    </source>
</evidence>
<evidence type="ECO:0000269" key="13">
    <source>
    </source>
</evidence>
<evidence type="ECO:0000269" key="14">
    <source>
    </source>
</evidence>
<evidence type="ECO:0000269" key="15">
    <source>
    </source>
</evidence>
<evidence type="ECO:0000269" key="16">
    <source>
    </source>
</evidence>
<evidence type="ECO:0000269" key="17">
    <source>
    </source>
</evidence>
<evidence type="ECO:0000269" key="18">
    <source>
    </source>
</evidence>
<evidence type="ECO:0000269" key="19">
    <source>
    </source>
</evidence>
<evidence type="ECO:0000269" key="20">
    <source>
    </source>
</evidence>
<evidence type="ECO:0000303" key="21">
    <source>
    </source>
</evidence>
<evidence type="ECO:0000303" key="22">
    <source>
    </source>
</evidence>
<evidence type="ECO:0000305" key="23"/>
<evidence type="ECO:0000305" key="24">
    <source>
    </source>
</evidence>
<evidence type="ECO:0000305" key="25">
    <source>
    </source>
</evidence>
<evidence type="ECO:0000312" key="26">
    <source>
        <dbReference type="Araport" id="AT1G09570"/>
    </source>
</evidence>
<evidence type="ECO:0000312" key="27">
    <source>
        <dbReference type="EMBL" id="AAC33219.1"/>
    </source>
</evidence>
<evidence type="ECO:0007829" key="28">
    <source>
        <dbReference type="PDB" id="8F5Z"/>
    </source>
</evidence>
<evidence type="ECO:0007829" key="29">
    <source>
        <dbReference type="PDB" id="8IFF"/>
    </source>
</evidence>
<evidence type="ECO:0007829" key="30">
    <source>
        <dbReference type="PDB" id="8ISJ"/>
    </source>
</evidence>
<gene>
    <name evidence="21" type="primary">PHYA</name>
    <name evidence="24 25" type="synonym">FHY2</name>
    <name type="synonym">FRE1</name>
    <name evidence="22" type="synonym">HY8</name>
    <name evidence="26" type="ordered locus">At1g09570</name>
    <name evidence="27" type="ORF">F14J9.23</name>
</gene>
<proteinExistence type="evidence at protein level"/>
<keyword id="KW-0002">3D-structure</keyword>
<keyword id="KW-0025">Alternative splicing</keyword>
<keyword id="KW-0157">Chromophore</keyword>
<keyword id="KW-0963">Cytoplasm</keyword>
<keyword id="KW-0418">Kinase</keyword>
<keyword id="KW-0539">Nucleus</keyword>
<keyword id="KW-0597">Phosphoprotein</keyword>
<keyword id="KW-0600">Photoreceptor protein</keyword>
<keyword id="KW-0675">Receptor</keyword>
<keyword id="KW-1185">Reference proteome</keyword>
<keyword id="KW-0677">Repeat</keyword>
<keyword id="KW-0716">Sensory transduction</keyword>
<keyword id="KW-0804">Transcription</keyword>
<keyword id="KW-0805">Transcription regulation</keyword>
<keyword id="KW-0808">Transferase</keyword>
<feature type="chain" id="PRO_0000171962" description="Phytochrome A">
    <location>
        <begin position="1"/>
        <end position="1122"/>
    </location>
</feature>
<feature type="domain" description="GAF" evidence="2">
    <location>
        <begin position="218"/>
        <end position="402"/>
    </location>
</feature>
<feature type="domain" description="PAS 1" evidence="4">
    <location>
        <begin position="618"/>
        <end position="688"/>
    </location>
</feature>
<feature type="domain" description="PAC" evidence="5">
    <location>
        <begin position="695"/>
        <end position="747"/>
    </location>
</feature>
<feature type="domain" description="PAS 2" evidence="4">
    <location>
        <begin position="748"/>
        <end position="822"/>
    </location>
</feature>
<feature type="domain" description="Histidine kinase" evidence="3">
    <location>
        <begin position="902"/>
        <end position="1119"/>
    </location>
</feature>
<feature type="region of interest" description="Disordered" evidence="6">
    <location>
        <begin position="1"/>
        <end position="21"/>
    </location>
</feature>
<feature type="compositionally biased region" description="Polar residues" evidence="6">
    <location>
        <begin position="1"/>
        <end position="11"/>
    </location>
</feature>
<feature type="binding site" description="covalent" evidence="1">
    <location>
        <position position="323"/>
    </location>
    <ligand>
        <name>phytochromobilin</name>
        <dbReference type="ChEBI" id="CHEBI:189064"/>
    </ligand>
</feature>
<feature type="splice variant" id="VSP_036311" description="In isoform 2." evidence="23">
    <location>
        <begin position="1"/>
        <end position="108"/>
    </location>
</feature>
<feature type="mutagenesis site" description="In phyA-5; reduced binding to FHY1 and FHL leading to a reduced nuclear import under low fluences of far-red light (FR) light. Hyposensitivity to continuous low-intensity FR, and reduced very-low-fluence response and high-irradiance response." evidence="16">
    <original>A</original>
    <variation>V</variation>
    <location>
        <position position="30"/>
    </location>
</feature>
<feature type="mutagenesis site" description="Constitutively active in the Pfr form, leading to a constitutively photomorphogenic (cop) phenotype and reduced accumulation in the nucleus." evidence="15">
    <original>Y</original>
    <variation>H</variation>
    <location>
        <position position="242"/>
    </location>
</feature>
<feature type="mutagenesis site" description="Unable to bind the chromophore and cannot be converted to Pfr, fails to accumulate in the nucleus and to interact with FHY1." evidence="15">
    <original>C</original>
    <variation>A</variation>
    <location>
        <position position="323"/>
    </location>
</feature>
<feature type="mutagenesis site" description="In HY8-3; no regulatory activity." evidence="20">
    <original>G</original>
    <variation>E</variation>
    <location>
        <position position="727"/>
    </location>
</feature>
<feature type="sequence conflict" description="In Ref. 1; CAA35221." evidence="23" ref="1">
    <original>E</original>
    <variation>D</variation>
    <location>
        <position position="835"/>
    </location>
</feature>
<feature type="sequence conflict" description="In Ref. 1; CAA35221." evidence="23" ref="1">
    <original>E</original>
    <variation>K</variation>
    <location>
        <position position="862"/>
    </location>
</feature>
<feature type="helix" evidence="30">
    <location>
        <begin position="74"/>
        <end position="76"/>
    </location>
</feature>
<feature type="strand" evidence="30">
    <location>
        <begin position="84"/>
        <end position="90"/>
    </location>
</feature>
<feature type="turn" evidence="30">
    <location>
        <begin position="91"/>
        <end position="93"/>
    </location>
</feature>
<feature type="strand" evidence="30">
    <location>
        <begin position="95"/>
        <end position="99"/>
    </location>
</feature>
<feature type="helix" evidence="30">
    <location>
        <begin position="101"/>
        <end position="106"/>
    </location>
</feature>
<feature type="helix" evidence="30">
    <location>
        <begin position="129"/>
        <end position="132"/>
    </location>
</feature>
<feature type="helix" evidence="30">
    <location>
        <begin position="135"/>
        <end position="146"/>
    </location>
</feature>
<feature type="helix" evidence="30">
    <location>
        <begin position="150"/>
        <end position="153"/>
    </location>
</feature>
<feature type="strand" evidence="30">
    <location>
        <begin position="156"/>
        <end position="163"/>
    </location>
</feature>
<feature type="strand" evidence="30">
    <location>
        <begin position="166"/>
        <end position="174"/>
    </location>
</feature>
<feature type="strand" evidence="30">
    <location>
        <begin position="177"/>
        <end position="184"/>
    </location>
</feature>
<feature type="strand" evidence="30">
    <location>
        <begin position="191"/>
        <end position="193"/>
    </location>
</feature>
<feature type="turn" evidence="30">
    <location>
        <begin position="197"/>
        <end position="199"/>
    </location>
</feature>
<feature type="helix" evidence="30">
    <location>
        <begin position="200"/>
        <end position="204"/>
    </location>
</feature>
<feature type="helix" evidence="30">
    <location>
        <begin position="205"/>
        <end position="212"/>
    </location>
</feature>
<feature type="helix" evidence="30">
    <location>
        <begin position="219"/>
        <end position="234"/>
    </location>
</feature>
<feature type="strand" evidence="30">
    <location>
        <begin position="237"/>
        <end position="240"/>
    </location>
</feature>
<feature type="strand" evidence="30">
    <location>
        <begin position="255"/>
        <end position="257"/>
    </location>
</feature>
<feature type="strand" evidence="30">
    <location>
        <begin position="259"/>
        <end position="261"/>
    </location>
</feature>
<feature type="strand" evidence="29">
    <location>
        <begin position="267"/>
        <end position="269"/>
    </location>
</feature>
<feature type="helix" evidence="30">
    <location>
        <begin position="271"/>
        <end position="273"/>
    </location>
</feature>
<feature type="helix" evidence="30">
    <location>
        <begin position="276"/>
        <end position="281"/>
    </location>
</feature>
<feature type="turn" evidence="30">
    <location>
        <begin position="282"/>
        <end position="284"/>
    </location>
</feature>
<feature type="strand" evidence="30">
    <location>
        <begin position="287"/>
        <end position="291"/>
    </location>
</feature>
<feature type="strand" evidence="29">
    <location>
        <begin position="293"/>
        <end position="295"/>
    </location>
</feature>
<feature type="strand" evidence="28">
    <location>
        <begin position="298"/>
        <end position="300"/>
    </location>
</feature>
<feature type="helix" evidence="30">
    <location>
        <begin position="322"/>
        <end position="330"/>
    </location>
</feature>
<feature type="strand" evidence="30">
    <location>
        <begin position="335"/>
        <end position="345"/>
    </location>
</feature>
<feature type="strand" evidence="30">
    <location>
        <begin position="362"/>
        <end position="375"/>
    </location>
</feature>
<feature type="helix" evidence="30">
    <location>
        <begin position="383"/>
        <end position="397"/>
    </location>
</feature>
<feature type="strand" evidence="30">
    <location>
        <begin position="400"/>
        <end position="402"/>
    </location>
</feature>
<feature type="helix" evidence="30">
    <location>
        <begin position="405"/>
        <end position="424"/>
    </location>
</feature>
<feature type="turn" evidence="29">
    <location>
        <begin position="428"/>
        <end position="430"/>
    </location>
</feature>
<feature type="helix" evidence="30">
    <location>
        <begin position="431"/>
        <end position="434"/>
    </location>
</feature>
<feature type="strand" evidence="30">
    <location>
        <begin position="435"/>
        <end position="437"/>
    </location>
</feature>
<feature type="helix" evidence="30">
    <location>
        <begin position="439"/>
        <end position="441"/>
    </location>
</feature>
<feature type="turn" evidence="30">
    <location>
        <begin position="442"/>
        <end position="444"/>
    </location>
</feature>
<feature type="strand" evidence="30">
    <location>
        <begin position="446"/>
        <end position="452"/>
    </location>
</feature>
<feature type="strand" evidence="30">
    <location>
        <begin position="455"/>
        <end position="458"/>
    </location>
</feature>
<feature type="helix" evidence="30">
    <location>
        <begin position="465"/>
        <end position="478"/>
    </location>
</feature>
<feature type="strand" evidence="30">
    <location>
        <begin position="483"/>
        <end position="488"/>
    </location>
</feature>
<feature type="helix" evidence="30">
    <location>
        <begin position="490"/>
        <end position="493"/>
    </location>
</feature>
<feature type="helix" evidence="30">
    <location>
        <begin position="498"/>
        <end position="501"/>
    </location>
</feature>
<feature type="strand" evidence="30">
    <location>
        <begin position="507"/>
        <end position="516"/>
    </location>
</feature>
<feature type="strand" evidence="30">
    <location>
        <begin position="518"/>
        <end position="523"/>
    </location>
</feature>
<feature type="strand" evidence="30">
    <location>
        <begin position="533"/>
        <end position="535"/>
    </location>
</feature>
<feature type="strand" evidence="28">
    <location>
        <begin position="557"/>
        <end position="559"/>
    </location>
</feature>
<feature type="helix" evidence="30">
    <location>
        <begin position="570"/>
        <end position="588"/>
    </location>
</feature>
<feature type="strand" evidence="30">
    <location>
        <begin position="746"/>
        <end position="748"/>
    </location>
</feature>
<feature type="strand" evidence="30">
    <location>
        <begin position="750"/>
        <end position="753"/>
    </location>
</feature>
<feature type="strand" evidence="28">
    <location>
        <begin position="755"/>
        <end position="757"/>
    </location>
</feature>
<feature type="strand" evidence="30">
    <location>
        <begin position="766"/>
        <end position="769"/>
    </location>
</feature>
<feature type="strand" evidence="30">
    <location>
        <begin position="773"/>
        <end position="778"/>
    </location>
</feature>
<feature type="helix" evidence="30">
    <location>
        <begin position="780"/>
        <end position="786"/>
    </location>
</feature>
<feature type="helix" evidence="30">
    <location>
        <begin position="790"/>
        <end position="792"/>
    </location>
</feature>
<feature type="strand" evidence="30">
    <location>
        <begin position="794"/>
        <end position="797"/>
    </location>
</feature>
<feature type="turn" evidence="30">
    <location>
        <begin position="800"/>
        <end position="802"/>
    </location>
</feature>
<feature type="strand" evidence="30">
    <location>
        <begin position="803"/>
        <end position="807"/>
    </location>
</feature>
<feature type="strand" evidence="30">
    <location>
        <begin position="809"/>
        <end position="811"/>
    </location>
</feature>
<feature type="helix" evidence="30">
    <location>
        <begin position="815"/>
        <end position="831"/>
    </location>
</feature>
<feature type="strand" evidence="30">
    <location>
        <begin position="835"/>
        <end position="842"/>
    </location>
</feature>
<feature type="strand" evidence="30">
    <location>
        <begin position="844"/>
        <end position="846"/>
    </location>
</feature>
<feature type="strand" evidence="30">
    <location>
        <begin position="848"/>
        <end position="857"/>
    </location>
</feature>
<feature type="strand" evidence="30">
    <location>
        <begin position="868"/>
        <end position="873"/>
    </location>
</feature>
<feature type="helix" evidence="30">
    <location>
        <begin position="877"/>
        <end position="923"/>
    </location>
</feature>
<feature type="helix" evidence="30">
    <location>
        <begin position="928"/>
        <end position="949"/>
    </location>
</feature>
<feature type="helix" evidence="30">
    <location>
        <begin position="953"/>
        <end position="958"/>
    </location>
</feature>
<feature type="strand" evidence="30">
    <location>
        <begin position="966"/>
        <end position="969"/>
    </location>
</feature>
<feature type="helix" evidence="30">
    <location>
        <begin position="970"/>
        <end position="979"/>
    </location>
</feature>
<feature type="helix" evidence="30">
    <location>
        <begin position="982"/>
        <end position="987"/>
    </location>
</feature>
<feature type="strand" evidence="30">
    <location>
        <begin position="991"/>
        <end position="994"/>
    </location>
</feature>
<feature type="helix" evidence="30">
    <location>
        <begin position="998"/>
        <end position="1002"/>
    </location>
</feature>
<feature type="strand" evidence="30">
    <location>
        <begin position="1004"/>
        <end position="1007"/>
    </location>
</feature>
<feature type="helix" evidence="30">
    <location>
        <begin position="1009"/>
        <end position="1025"/>
    </location>
</feature>
<feature type="strand" evidence="30">
    <location>
        <begin position="1032"/>
        <end position="1040"/>
    </location>
</feature>
<feature type="strand" evidence="29">
    <location>
        <begin position="1045"/>
        <end position="1047"/>
    </location>
</feature>
<feature type="strand" evidence="30">
    <location>
        <begin position="1051"/>
        <end position="1062"/>
    </location>
</feature>
<feature type="helix" evidence="30">
    <location>
        <begin position="1066"/>
        <end position="1073"/>
    </location>
</feature>
<feature type="strand" evidence="28">
    <location>
        <begin position="1076"/>
        <end position="1078"/>
    </location>
</feature>
<feature type="helix" evidence="30">
    <location>
        <begin position="1080"/>
        <end position="1095"/>
    </location>
</feature>
<feature type="strand" evidence="30">
    <location>
        <begin position="1100"/>
        <end position="1105"/>
    </location>
</feature>
<feature type="strand" evidence="30">
    <location>
        <begin position="1108"/>
        <end position="1118"/>
    </location>
</feature>
<protein>
    <recommendedName>
        <fullName evidence="21">Phytochrome A</fullName>
    </recommendedName>
    <alternativeName>
        <fullName evidence="22">Protein ELONGATED HYPOCOTYL 8</fullName>
    </alternativeName>
    <alternativeName>
        <fullName>Protein FAR RED ELONGATED 1</fullName>
    </alternativeName>
    <alternativeName>
        <fullName evidence="24 25">Protein FAR RED ELONGATED HYPOCOTYL 2</fullName>
    </alternativeName>
</protein>
<comment type="function">
    <text evidence="7 9 10 13 14 16 19">Regulatory photoreceptor which exists in two forms that are reversibly interconvertible by light: the Pr form that absorbs maximally in the red region of the spectrum and the Pfr form that absorbs maximally in the far-red region. Photoconversion of Pr to Pfr induces an array of morphogenetic responses, whereas reconversion of Pfr to Pr cancels the induction of those responses. Pfr controls the expression of a number of nuclear genes including those encoding the small subunit of ribulose-bisphosphate carboxylase, chlorophyll A/B binding protein, protochlorophyllide reductase, rRNA, etc. It also controls the expression of its own gene(s) in a negative feedback fashion. Involved in the flowering time regulation. Can phosphorylate FHY1 and, possibly, FHL, in red light conditions; this inactivates their co-shuttling to the nucleus (PubMed:19208901). Regulates phototropic responses both in the nucleus (e.g. hypocotyl elongation and cotyledon opening under high-irradiance conditions and seed germination under very-low-fluence conditions) and in the cytoplasm (e.g. negative gravitropism in blue light and red-enhanced phototropism) (PubMed:17566111). Promotes seed germination, suppression of hypocotyl elongation, and randomization of hypocotyl growth orientation in far-red light; these responses to far-red light are repressed by UNE10/PIF8 (PubMed:31732705). Stabilizes UNE10/PIF8 but sequesters PIF3/PAP3 from its target genes promoters in far-red light (PubMed:31732705).</text>
</comment>
<comment type="subunit">
    <text evidence="7 8 9 11 12 13 14 15 17 19">Homodimer. Interacts with NDPK2 and PKS4. Stabilized by interactions with PAPP5 and FYPP3 which are enhanced in the phosphorylated Pfr form. Interacts with COP1/SPA1 complex (PubMed:12468726, PubMed:15465053, PubMed:15707897, PubMed:18390804, PubMed:18722184). Binds, via its photosensory domain, to PTAC12/HMR when photoactivated; this interaction stimulates its localization to photobodies (PubMed:22895253). Interacts with FHY1, FHL and FHY3, especially upon far-red (FR) light illumination; when underphosphorylated (PubMed:18722184, PubMed:19208901, PubMed:19482971, PubMed:21884939). Forms PHYA/FHY1/HFR1 complex (PubMed:19482971). Binds to PIF3/PAP3 (PubMed:31732705).</text>
</comment>
<comment type="interaction">
    <interactant intactId="EBI-624446">
        <id>P14712</id>
    </interactant>
    <interactant intactId="EBI-1163353">
        <id>A8MR65</id>
        <label>FHL</label>
    </interactant>
    <organismsDiffer>false</organismsDiffer>
    <experiments>3</experiments>
</comment>
<comment type="interaction">
    <interactant intactId="EBI-624446">
        <id>P14712</id>
    </interactant>
    <interactant intactId="EBI-1163379">
        <id>Q8S4Q6</id>
        <label>FHY1</label>
    </interactant>
    <organismsDiffer>false</organismsDiffer>
    <experiments>4</experiments>
</comment>
<comment type="interaction">
    <interactant intactId="EBI-624446">
        <id>P14712</id>
    </interactant>
    <interactant intactId="EBI-349517">
        <id>O64903</id>
        <label>NDPK2</label>
    </interactant>
    <organismsDiffer>false</organismsDiffer>
    <experiments>3</experiments>
</comment>
<comment type="interaction">
    <interactant intactId="EBI-624446">
        <id>P14712</id>
    </interactant>
    <interactant intactId="EBI-624446">
        <id>P14712</id>
        <label>PHYA</label>
    </interactant>
    <organismsDiffer>false</organismsDiffer>
    <experiments>3</experiments>
</comment>
<comment type="interaction">
    <interactant intactId="EBI-624446">
        <id>P14712</id>
    </interactant>
    <interactant intactId="EBI-625701">
        <id>O80536</id>
        <label>PIF3</label>
    </interactant>
    <organismsDiffer>false</organismsDiffer>
    <experiments>8</experiments>
</comment>
<comment type="interaction">
    <interactant intactId="EBI-624446">
        <id>P14712</id>
    </interactant>
    <interactant intactId="EBI-625732">
        <id>Q8W2F3-2</id>
        <label>PIF4</label>
    </interactant>
    <organismsDiffer>false</organismsDiffer>
    <experiments>2</experiments>
</comment>
<comment type="interaction">
    <interactant intactId="EBI-624446">
        <id>P14712</id>
    </interactant>
    <interactant intactId="EBI-626200">
        <id>Q9SWI1</id>
        <label>PKS1</label>
    </interactant>
    <organismsDiffer>false</organismsDiffer>
    <experiments>3</experiments>
</comment>
<comment type="interaction">
    <interactant intactId="EBI-624446">
        <id>P14712</id>
    </interactant>
    <interactant intactId="EBI-1163369">
        <id>Q80936</id>
        <label>E1</label>
    </interactant>
    <organismsDiffer>true</organismsDiffer>
    <experiments>2</experiments>
</comment>
<comment type="subcellular location">
    <subcellularLocation>
        <location evidence="9 16">Cytoplasm</location>
    </subcellularLocation>
    <subcellularLocation>
        <location evidence="9 16">Nucleus</location>
        <location evidence="9 16">Nucleoplasm</location>
    </subcellularLocation>
    <subcellularLocation>
        <location evidence="9">Nucleus speckle</location>
    </subcellularLocation>
    <text evidence="9 16">Cytoplasmic in darkness, but translocated to the nucleus upon illumination, when associated with PAPP5 into speckles.</text>
</comment>
<comment type="alternative products">
    <event type="alternative splicing"/>
    <isoform>
        <id>P14712-1</id>
        <name>1</name>
        <sequence type="displayed"/>
    </isoform>
    <isoform>
        <id>P14712-2</id>
        <name>2</name>
        <sequence type="described" ref="VSP_036311"/>
    </isoform>
</comment>
<comment type="tissue specificity">
    <text evidence="18">Expressed in fruits, flowers, leaves, stems, seedlings and roots.</text>
</comment>
<comment type="developmental stage">
    <text evidence="18">Accumulates progressively in maturating seeds to reach a peak in dry seeds (PubMed:23708772). Expressed upon seed imbibition (PubMed:23708772).</text>
</comment>
<comment type="induction">
    <text evidence="18">Induced by cold.</text>
</comment>
<comment type="PTM">
    <text>Phosphorylated.</text>
</comment>
<comment type="PTM">
    <text evidence="1">Contains one covalently linked phytochromobilin chromophore.</text>
</comment>
<comment type="disruption phenotype">
    <text evidence="14">Blind to far-red (FR). Impaired inhibition of hypocotyl elongation and cotyledons expansion under continuous FR light conditions.</text>
</comment>
<comment type="miscellaneous">
    <text>PHYA association with FHY1 and FHY3 protect underphosphorylated PHYA from being recognized by the COP1/SPA complex.</text>
</comment>
<comment type="similarity">
    <text evidence="23">Belongs to the phytochrome family.</text>
</comment>
<sequence>MSGSRPTQSSEGSRRSRHSARIIAQTTVDAKLHADFEESGSSFDYSTSVRVTGPVVENQPPRSDKVTTTYLHHIQKGKLIQPFGCLLALDEKTFKVIAYSENASELLTMASHAVPSVGEHPVLGIGTDIRSLFTAPSASALQKALGFGDVSLLNPILVHCRTSAKPFYAIIHRVTGSIIIDFEPVKPYEVPMTAAGALQSYKLAAKAITRLQSLPSGSMERLCDTMVQEVFELTGYDRVMAYKFHEDDHGEVVSEVTKPGLEPYLGLHYPATDIPQAARFLFMKNKVRMIVDCNAKHARVLQDEKLSFDLTLCGSTLRAPHSCHLQYMANMDSIASLVMAVVVNEEDGEGDAPDATTQPQKRKRLWGLVVCHNTTPRFVPFPLRYACEFLAQVFAIHVNKEVELDNQMVEKNILRTQTLLCDMLMRDAPLGIVSQSPNIMDLVKCDGAALLYKDKIWKLGTTPSEFHLQEIASWLCEYHMDSTGLSTDSLHDAGFPRALSLGDSVCGMAAVRISSKDMIFWFRSHTAGEVRWGGAKHDPDDRDDARRMHPRSSFKAFLEVVKTRSLPWKDYEMDAIHSLQLILRNAFKDSETTDVNTKVIYSKLNDLKIDGIQELEAVTSEMVRLIETATVPILAVDSDGLVNGWNTKIAELTGLSVDEAIGKHFLTLVEDSSVEIVKRMLENALEGTEEQNVQFEIKTHLSRADAGPISLVVNACASRDLHENVVGVCFVAHDLTGQKTVMDKFTRIEGDYKAIIQNPNPLIPPIFGTDEFGWCTEWNPAMSKLTGLKREEVIDKMLLGEVFGTQKSCCRLKNQEAFVNLGIVLNNAVTSQDPEKVSFAFFTRGGKYVECLLCVSKKLDREGVVTGVFCFLQLASHELQQALHVQRLAERTAVKRLKALAYIKRQIRNPLSGIMFTRKMIEGTELGPEQRRILQTSALCQKQLSKILDDSDLESIIEGCLDLEMKEFTLNEVLTASTSQVMMKSNGKSVRITNETGEEVMSDTLYGDSIRLQQVLADFMLMAVNFTPSGGQLTVSASLRKDQLGRSVHLANLEIRLTHTGAGIPEFLLNQMFGTEEDVSEEGLSLMVSRKLVKLMNGDVQYLRQAGKSSFIITAELAAANK</sequence>
<reference key="1">
    <citation type="journal article" date="1989" name="Genes Dev.">
        <title>Novel phytochrome sequences in Arabidopsis thaliana: structure, evolution, and differential expression of a plant regulatory photoreceptor family.</title>
        <authorList>
            <person name="Sharrock R.A."/>
            <person name="Quail P.H."/>
        </authorList>
    </citation>
    <scope>NUCLEOTIDE SEQUENCE [MRNA] (ISOFORM 1)</scope>
    <source>
        <strain>cv. Columbia</strain>
    </source>
</reference>
<reference key="2">
    <citation type="journal article" date="1993" name="Plant Cell">
        <title>Arabidopsis HY8 locus encodes phytochrome A.</title>
        <authorList>
            <person name="Dehesh K."/>
            <person name="Franci C."/>
            <person name="Parks B.M."/>
            <person name="Seeley K.A."/>
            <person name="Short T.W."/>
            <person name="Tepperman J.M."/>
            <person name="Quail P.H."/>
        </authorList>
    </citation>
    <scope>NUCLEOTIDE SEQUENCE [GENOMIC DNA]</scope>
    <scope>MUTAGENESIS OF GLY-727</scope>
    <source>
        <strain>cv. RLD</strain>
    </source>
</reference>
<reference key="3">
    <citation type="journal article" date="2000" name="Nature">
        <title>Sequence and analysis of chromosome 1 of the plant Arabidopsis thaliana.</title>
        <authorList>
            <person name="Theologis A."/>
            <person name="Ecker J.R."/>
            <person name="Palm C.J."/>
            <person name="Federspiel N.A."/>
            <person name="Kaul S."/>
            <person name="White O."/>
            <person name="Alonso J."/>
            <person name="Altafi H."/>
            <person name="Araujo R."/>
            <person name="Bowman C.L."/>
            <person name="Brooks S.Y."/>
            <person name="Buehler E."/>
            <person name="Chan A."/>
            <person name="Chao Q."/>
            <person name="Chen H."/>
            <person name="Cheuk R.F."/>
            <person name="Chin C.W."/>
            <person name="Chung M.K."/>
            <person name="Conn L."/>
            <person name="Conway A.B."/>
            <person name="Conway A.R."/>
            <person name="Creasy T.H."/>
            <person name="Dewar K."/>
            <person name="Dunn P."/>
            <person name="Etgu P."/>
            <person name="Feldblyum T.V."/>
            <person name="Feng J.-D."/>
            <person name="Fong B."/>
            <person name="Fujii C.Y."/>
            <person name="Gill J.E."/>
            <person name="Goldsmith A.D."/>
            <person name="Haas B."/>
            <person name="Hansen N.F."/>
            <person name="Hughes B."/>
            <person name="Huizar L."/>
            <person name="Hunter J.L."/>
            <person name="Jenkins J."/>
            <person name="Johnson-Hopson C."/>
            <person name="Khan S."/>
            <person name="Khaykin E."/>
            <person name="Kim C.J."/>
            <person name="Koo H.L."/>
            <person name="Kremenetskaia I."/>
            <person name="Kurtz D.B."/>
            <person name="Kwan A."/>
            <person name="Lam B."/>
            <person name="Langin-Hooper S."/>
            <person name="Lee A."/>
            <person name="Lee J.M."/>
            <person name="Lenz C.A."/>
            <person name="Li J.H."/>
            <person name="Li Y.-P."/>
            <person name="Lin X."/>
            <person name="Liu S.X."/>
            <person name="Liu Z.A."/>
            <person name="Luros J.S."/>
            <person name="Maiti R."/>
            <person name="Marziali A."/>
            <person name="Militscher J."/>
            <person name="Miranda M."/>
            <person name="Nguyen M."/>
            <person name="Nierman W.C."/>
            <person name="Osborne B.I."/>
            <person name="Pai G."/>
            <person name="Peterson J."/>
            <person name="Pham P.K."/>
            <person name="Rizzo M."/>
            <person name="Rooney T."/>
            <person name="Rowley D."/>
            <person name="Sakano H."/>
            <person name="Salzberg S.L."/>
            <person name="Schwartz J.R."/>
            <person name="Shinn P."/>
            <person name="Southwick A.M."/>
            <person name="Sun H."/>
            <person name="Tallon L.J."/>
            <person name="Tambunga G."/>
            <person name="Toriumi M.J."/>
            <person name="Town C.D."/>
            <person name="Utterback T."/>
            <person name="Van Aken S."/>
            <person name="Vaysberg M."/>
            <person name="Vysotskaia V.S."/>
            <person name="Walker M."/>
            <person name="Wu D."/>
            <person name="Yu G."/>
            <person name="Fraser C.M."/>
            <person name="Venter J.C."/>
            <person name="Davis R.W."/>
        </authorList>
    </citation>
    <scope>NUCLEOTIDE SEQUENCE [LARGE SCALE GENOMIC DNA]</scope>
    <source>
        <strain>cv. Columbia</strain>
    </source>
</reference>
<reference key="4">
    <citation type="journal article" date="2017" name="Plant J.">
        <title>Araport11: a complete reannotation of the Arabidopsis thaliana reference genome.</title>
        <authorList>
            <person name="Cheng C.Y."/>
            <person name="Krishnakumar V."/>
            <person name="Chan A.P."/>
            <person name="Thibaud-Nissen F."/>
            <person name="Schobel S."/>
            <person name="Town C.D."/>
        </authorList>
    </citation>
    <scope>GENOME REANNOTATION</scope>
    <source>
        <strain>cv. Columbia</strain>
    </source>
</reference>
<reference key="5">
    <citation type="journal article" date="2003" name="Science">
        <title>Empirical analysis of transcriptional activity in the Arabidopsis genome.</title>
        <authorList>
            <person name="Yamada K."/>
            <person name="Lim J."/>
            <person name="Dale J.M."/>
            <person name="Chen H."/>
            <person name="Shinn P."/>
            <person name="Palm C.J."/>
            <person name="Southwick A.M."/>
            <person name="Wu H.C."/>
            <person name="Kim C.J."/>
            <person name="Nguyen M."/>
            <person name="Pham P.K."/>
            <person name="Cheuk R.F."/>
            <person name="Karlin-Newmann G."/>
            <person name="Liu S.X."/>
            <person name="Lam B."/>
            <person name="Sakano H."/>
            <person name="Wu T."/>
            <person name="Yu G."/>
            <person name="Miranda M."/>
            <person name="Quach H.L."/>
            <person name="Tripp M."/>
            <person name="Chang C.H."/>
            <person name="Lee J.M."/>
            <person name="Toriumi M.J."/>
            <person name="Chan M.M."/>
            <person name="Tang C.C."/>
            <person name="Onodera C.S."/>
            <person name="Deng J.M."/>
            <person name="Akiyama K."/>
            <person name="Ansari Y."/>
            <person name="Arakawa T."/>
            <person name="Banh J."/>
            <person name="Banno F."/>
            <person name="Bowser L."/>
            <person name="Brooks S.Y."/>
            <person name="Carninci P."/>
            <person name="Chao Q."/>
            <person name="Choy N."/>
            <person name="Enju A."/>
            <person name="Goldsmith A.D."/>
            <person name="Gurjal M."/>
            <person name="Hansen N.F."/>
            <person name="Hayashizaki Y."/>
            <person name="Johnson-Hopson C."/>
            <person name="Hsuan V.W."/>
            <person name="Iida K."/>
            <person name="Karnes M."/>
            <person name="Khan S."/>
            <person name="Koesema E."/>
            <person name="Ishida J."/>
            <person name="Jiang P.X."/>
            <person name="Jones T."/>
            <person name="Kawai J."/>
            <person name="Kamiya A."/>
            <person name="Meyers C."/>
            <person name="Nakajima M."/>
            <person name="Narusaka M."/>
            <person name="Seki M."/>
            <person name="Sakurai T."/>
            <person name="Satou M."/>
            <person name="Tamse R."/>
            <person name="Vaysberg M."/>
            <person name="Wallender E.K."/>
            <person name="Wong C."/>
            <person name="Yamamura Y."/>
            <person name="Yuan S."/>
            <person name="Shinozaki K."/>
            <person name="Davis R.W."/>
            <person name="Theologis A."/>
            <person name="Ecker J.R."/>
        </authorList>
    </citation>
    <scope>NUCLEOTIDE SEQUENCE [LARGE SCALE MRNA] (ISOFORM 1)</scope>
    <source>
        <strain>cv. Columbia</strain>
    </source>
</reference>
<reference key="6">
    <citation type="journal article" date="2002" name="Plant Cell">
        <title>A phytochrome-associated protein phosphatase 2A modulates light signals in flowering time control in Arabidopsis.</title>
        <authorList>
            <person name="Kim D.-H."/>
            <person name="Kang J.-G."/>
            <person name="Yang S.-S."/>
            <person name="Chung K.-S."/>
            <person name="Song P.-S."/>
            <person name="Park C.-M."/>
        </authorList>
    </citation>
    <scope>FUNCTION</scope>
    <scope>INTERACTION WITH FYPP3</scope>
</reference>
<reference key="7">
    <citation type="journal article" date="2004" name="J. Mol. Biol.">
        <title>Structural analysis of Arabidopsis thaliana nucleoside diphosphate kinase-2 for phytochrome-mediated light signaling.</title>
        <authorList>
            <person name="Im Y.J."/>
            <person name="Kim J.I."/>
            <person name="Shen Y."/>
            <person name="Na Y."/>
            <person name="Han Y.J."/>
            <person name="Kim S.H."/>
            <person name="Song P.S."/>
            <person name="Eom S.H."/>
        </authorList>
    </citation>
    <scope>INTERACTION WITH NDPK2</scope>
</reference>
<reference key="8">
    <citation type="journal article" date="2005" name="Cell">
        <title>Phytochrome-specific type 5 phosphatase controls light signal flux by enhancing phytochrome stability and affinity for a signal transducer.</title>
        <authorList>
            <person name="Ryu J.S."/>
            <person name="Kim J.-I."/>
            <person name="Kunkel T."/>
            <person name="Kim B.C."/>
            <person name="Cho D.S."/>
            <person name="Hong S.H."/>
            <person name="Kim S.-H."/>
            <person name="Fernandez A.P."/>
            <person name="Kim Y."/>
            <person name="Alonso J.M."/>
            <person name="Ecker J.R."/>
            <person name="Nagy F."/>
            <person name="Lim P.O."/>
            <person name="Song P.-S."/>
            <person name="Schaefer E."/>
            <person name="Nam H.G."/>
        </authorList>
    </citation>
    <scope>FUNCTION</scope>
    <scope>SUBCELLULAR LOCATION</scope>
    <scope>INTERACTION WITH PAPP5 AND NDPK2</scope>
</reference>
<reference key="9">
    <citation type="journal article" date="2007" name="Proc. Natl. Acad. Sci. U.S.A.">
        <title>Arabidopsis fhl/fhy1 double mutant reveals a distinct cytoplasmic action of phytochrome A.</title>
        <authorList>
            <person name="Roesler J."/>
            <person name="Klein I."/>
            <person name="Zeidler M."/>
        </authorList>
    </citation>
    <scope>FUNCTION</scope>
</reference>
<reference key="10">
    <citation type="journal article" date="2008" name="Mol. Cell">
        <title>Arabidopsis COP1/SPA1 complex and FHY1/FHY3 associate with distinct phosphorylated forms of phytochrome A in balancing light signaling.</title>
        <authorList>
            <person name="Saijo Y."/>
            <person name="Zhu D."/>
            <person name="Li J."/>
            <person name="Rubio V."/>
            <person name="Zhou Z."/>
            <person name="Shen Y."/>
            <person name="Hoecker U."/>
            <person name="Wang H."/>
            <person name="Deng X.W."/>
        </authorList>
    </citation>
    <scope>INTERACTION WITH COP1; SPA1; FHY1 AND FHY3</scope>
</reference>
<reference key="11">
    <citation type="journal article" date="2008" name="Plant Physiol.">
        <title>PHYTOCHROME KINASE SUBSTRATE4 modulates phytochrome-mediated control of hypocotyl growth orientation.</title>
        <authorList>
            <person name="Schepens I."/>
            <person name="Boccalandro H.E."/>
            <person name="Kami C."/>
            <person name="Casal J.J."/>
            <person name="Fankhauser C."/>
        </authorList>
    </citation>
    <scope>INTERACTION WITH PKS4</scope>
</reference>
<reference key="12">
    <citation type="journal article" date="2009" name="Plant Cell">
        <title>Phytochrome A mediates rapid red light-induced phosphorylation of Arabidopsis FAR-RED ELONGATED HYPOCOTYL1 in a low fluence response.</title>
        <authorList>
            <person name="Shen Y."/>
            <person name="Zhou Z."/>
            <person name="Feng S."/>
            <person name="Li J."/>
            <person name="Tan-Wilson A."/>
            <person name="Qu L.J."/>
            <person name="Wang H."/>
            <person name="Deng X.W."/>
        </authorList>
    </citation>
    <scope>FUNCTION</scope>
    <scope>INTERACTION WITH PHYA AND FHL</scope>
</reference>
<reference key="13">
    <citation type="journal article" date="2009" name="Plant Cell">
        <title>FAR-RED ELONGATED HYPOCOTYL1 and FHY1-LIKE associate with the Arabidopsis transcription factors LAF1 and HFR1 to transmit phytochrome A signals for inhibition of hypocotyl elongation.</title>
        <authorList>
            <person name="Yang S.W."/>
            <person name="Jang I.-C."/>
            <person name="Henriques R."/>
            <person name="Chua N.-H."/>
        </authorList>
    </citation>
    <scope>FUNCTION</scope>
    <scope>DISRUPTION PHENOTYPE</scope>
    <scope>SUBCELLULAR LOCATION</scope>
    <scope>INTERACTION WITH FHY1; HFR1 AND FHL</scope>
    <source>
        <strain>cv. Columbia</strain>
    </source>
</reference>
<reference key="14">
    <citation type="journal article" date="2011" name="Cell">
        <title>Photoconversion and nuclear trafficking cycles determine phytochrome A's response profile to far-red light.</title>
        <authorList>
            <person name="Rausenberger J."/>
            <person name="Tscheuschler A."/>
            <person name="Nordmeier W."/>
            <person name="Wuest F."/>
            <person name="Timmer J."/>
            <person name="Schaefer E."/>
            <person name="Fleck C."/>
            <person name="Hiltbrunner A."/>
        </authorList>
    </citation>
    <scope>INTERACTION WITH FHY1 AND FHL</scope>
    <scope>MUTAGENESIS OF TYR-242 AND CYS-323</scope>
</reference>
<reference key="15">
    <citation type="journal article" date="2012" name="Genes Dev.">
        <title>Photoactivated phytochromes interact with HEMERA and promote its accumulation to establish photomorphogenesis in Arabidopsis.</title>
        <authorList>
            <person name="Galvao R.M."/>
            <person name="Li M."/>
            <person name="Kothadia S.M."/>
            <person name="Haskel J.D."/>
            <person name="Decker P.V."/>
            <person name="Van Buskirk E.K."/>
            <person name="Chen M."/>
        </authorList>
    </citation>
    <scope>INTERACTION WITH PTAC12/HMR</scope>
    <source>
        <strain>cv. Columbia</strain>
    </source>
</reference>
<reference key="16">
    <citation type="journal article" date="2012" name="Plant Physiol.">
        <title>Missense mutation in the amino terminus of phytochrome A disrupts the nuclear import of the photoreceptor.</title>
        <authorList>
            <person name="Sokolova V."/>
            <person name="Bindics J."/>
            <person name="Kircher S."/>
            <person name="Adam E."/>
            <person name="Schaefer E."/>
            <person name="Nagy F."/>
            <person name="Viczian A."/>
        </authorList>
    </citation>
    <scope>FUNCTION</scope>
    <scope>MUTAGENESIS OF ALA-30</scope>
    <scope>INTERACTION WITH FHY1 AND FHL</scope>
    <scope>SUBCELLULAR LOCATION</scope>
</reference>
<reference key="17">
    <citation type="journal article" date="2013" name="Mol. Cells">
        <title>Phytochrome-interacting factors have both shared and distinct biological roles.</title>
        <authorList>
            <person name="Jeong J."/>
            <person name="Choi G."/>
        </authorList>
    </citation>
    <scope>TISSUE SPECIFICITY</scope>
    <scope>DEVELOPMENTAL STAGE</scope>
    <scope>INDUCTION BY COLD</scope>
    <scope>REVIEW</scope>
</reference>
<reference key="18">
    <citation type="journal article" date="2020" name="Plant Cell">
        <title>PHYTOCHROME INTERACTING FACTOR8 inhibits phytochrome a-mediated far-red light responses in Arabidopsis.</title>
        <authorList>
            <person name="Oh J."/>
            <person name="Park E."/>
            <person name="Song K."/>
            <person name="Bae G."/>
            <person name="Choi G."/>
        </authorList>
    </citation>
    <scope>FUNCTION</scope>
    <scope>INTERACTION WITH PIF3/PAP3</scope>
    <source>
        <strain>cv. Columbia</strain>
    </source>
</reference>
<name>PHYA_ARATH</name>
<dbReference type="EMBL" id="X17341">
    <property type="protein sequence ID" value="CAA35221.1"/>
    <property type="molecule type" value="mRNA"/>
</dbReference>
<dbReference type="EMBL" id="L21154">
    <property type="protein sequence ID" value="AAA21351.1"/>
    <property type="molecule type" value="Genomic_DNA"/>
</dbReference>
<dbReference type="EMBL" id="AC003970">
    <property type="protein sequence ID" value="AAC33219.1"/>
    <property type="molecule type" value="Genomic_DNA"/>
</dbReference>
<dbReference type="EMBL" id="CP002684">
    <property type="protein sequence ID" value="AEE28462.1"/>
    <property type="molecule type" value="Genomic_DNA"/>
</dbReference>
<dbReference type="EMBL" id="CP002684">
    <property type="protein sequence ID" value="AEE28463.1"/>
    <property type="molecule type" value="Genomic_DNA"/>
</dbReference>
<dbReference type="EMBL" id="CP002684">
    <property type="protein sequence ID" value="ANM60635.1"/>
    <property type="molecule type" value="Genomic_DNA"/>
</dbReference>
<dbReference type="EMBL" id="CP002684">
    <property type="protein sequence ID" value="ANM60636.1"/>
    <property type="molecule type" value="Genomic_DNA"/>
</dbReference>
<dbReference type="EMBL" id="CP002684">
    <property type="protein sequence ID" value="ANM60637.1"/>
    <property type="molecule type" value="Genomic_DNA"/>
</dbReference>
<dbReference type="EMBL" id="AY039520">
    <property type="protein sequence ID" value="AAK62577.1"/>
    <property type="molecule type" value="mRNA"/>
</dbReference>
<dbReference type="PIR" id="A33473">
    <property type="entry name" value="FKMUA"/>
</dbReference>
<dbReference type="PIR" id="D86229">
    <property type="entry name" value="D86229"/>
</dbReference>
<dbReference type="RefSeq" id="NP_001117256.1">
    <molecule id="P14712-2"/>
    <property type="nucleotide sequence ID" value="NM_001123784.1"/>
</dbReference>
<dbReference type="RefSeq" id="NP_001322907.1">
    <molecule id="P14712-1"/>
    <property type="nucleotide sequence ID" value="NM_001331843.1"/>
</dbReference>
<dbReference type="RefSeq" id="NP_001322908.1">
    <molecule id="P14712-1"/>
    <property type="nucleotide sequence ID" value="NM_001331842.1"/>
</dbReference>
<dbReference type="RefSeq" id="NP_001322909.1">
    <molecule id="P14712-1"/>
    <property type="nucleotide sequence ID" value="NM_001331841.1"/>
</dbReference>
<dbReference type="RefSeq" id="NP_172428.1">
    <molecule id="P14712-1"/>
    <property type="nucleotide sequence ID" value="NM_100828.4"/>
</dbReference>
<dbReference type="PDB" id="8F5Z">
    <property type="method" value="EM"/>
    <property type="resolution" value="3.20 A"/>
    <property type="chains" value="A/B=1-1122"/>
</dbReference>
<dbReference type="PDB" id="8IFF">
    <property type="method" value="EM"/>
    <property type="resolution" value="3.10 A"/>
    <property type="chains" value="A/B=1-1122"/>
</dbReference>
<dbReference type="PDB" id="8ISI">
    <property type="method" value="EM"/>
    <property type="resolution" value="3.77 A"/>
    <property type="chains" value="A/B=1-1122"/>
</dbReference>
<dbReference type="PDB" id="8ISJ">
    <property type="method" value="EM"/>
    <property type="resolution" value="3.00 A"/>
    <property type="chains" value="A/B=1-1120"/>
</dbReference>
<dbReference type="PDBsum" id="8F5Z"/>
<dbReference type="PDBsum" id="8IFF"/>
<dbReference type="PDBsum" id="8ISI"/>
<dbReference type="PDBsum" id="8ISJ"/>
<dbReference type="EMDB" id="EMD-28869"/>
<dbReference type="EMDB" id="EMD-35415"/>
<dbReference type="EMDB" id="EMD-35691"/>
<dbReference type="EMDB" id="EMD-35692"/>
<dbReference type="SMR" id="P14712"/>
<dbReference type="BioGRID" id="22724">
    <property type="interactions" value="29"/>
</dbReference>
<dbReference type="DIP" id="DIP-33461N"/>
<dbReference type="FunCoup" id="P14712">
    <property type="interactions" value="107"/>
</dbReference>
<dbReference type="IntAct" id="P14712">
    <property type="interactions" value="12"/>
</dbReference>
<dbReference type="MINT" id="P14712"/>
<dbReference type="STRING" id="3702.P14712"/>
<dbReference type="PaxDb" id="3702-AT1G09570.1"/>
<dbReference type="ProteomicsDB" id="234753">
    <molecule id="P14712-1"/>
</dbReference>
<dbReference type="EnsemblPlants" id="AT1G09570.1">
    <molecule id="P14712-1"/>
    <property type="protein sequence ID" value="AT1G09570.1"/>
    <property type="gene ID" value="AT1G09570"/>
</dbReference>
<dbReference type="EnsemblPlants" id="AT1G09570.2">
    <molecule id="P14712-2"/>
    <property type="protein sequence ID" value="AT1G09570.2"/>
    <property type="gene ID" value="AT1G09570"/>
</dbReference>
<dbReference type="EnsemblPlants" id="AT1G09570.4">
    <molecule id="P14712-1"/>
    <property type="protein sequence ID" value="AT1G09570.4"/>
    <property type="gene ID" value="AT1G09570"/>
</dbReference>
<dbReference type="EnsemblPlants" id="AT1G09570.5">
    <molecule id="P14712-1"/>
    <property type="protein sequence ID" value="AT1G09570.5"/>
    <property type="gene ID" value="AT1G09570"/>
</dbReference>
<dbReference type="EnsemblPlants" id="AT1G09570.6">
    <molecule id="P14712-1"/>
    <property type="protein sequence ID" value="AT1G09570.6"/>
    <property type="gene ID" value="AT1G09570"/>
</dbReference>
<dbReference type="GeneID" id="837483"/>
<dbReference type="Gramene" id="AT1G09570.1">
    <molecule id="P14712-1"/>
    <property type="protein sequence ID" value="AT1G09570.1"/>
    <property type="gene ID" value="AT1G09570"/>
</dbReference>
<dbReference type="Gramene" id="AT1G09570.2">
    <molecule id="P14712-2"/>
    <property type="protein sequence ID" value="AT1G09570.2"/>
    <property type="gene ID" value="AT1G09570"/>
</dbReference>
<dbReference type="Gramene" id="AT1G09570.4">
    <molecule id="P14712-1"/>
    <property type="protein sequence ID" value="AT1G09570.4"/>
    <property type="gene ID" value="AT1G09570"/>
</dbReference>
<dbReference type="Gramene" id="AT1G09570.5">
    <molecule id="P14712-1"/>
    <property type="protein sequence ID" value="AT1G09570.5"/>
    <property type="gene ID" value="AT1G09570"/>
</dbReference>
<dbReference type="Gramene" id="AT1G09570.6">
    <molecule id="P14712-1"/>
    <property type="protein sequence ID" value="AT1G09570.6"/>
    <property type="gene ID" value="AT1G09570"/>
</dbReference>
<dbReference type="KEGG" id="ath:AT1G09570"/>
<dbReference type="Araport" id="AT1G09570"/>
<dbReference type="TAIR" id="AT1G09570">
    <property type="gene designation" value="PHYA"/>
</dbReference>
<dbReference type="eggNOG" id="ENOG502QRSA">
    <property type="taxonomic scope" value="Eukaryota"/>
</dbReference>
<dbReference type="InParanoid" id="P14712"/>
<dbReference type="OrthoDB" id="2015534at2759"/>
<dbReference type="PhylomeDB" id="P14712"/>
<dbReference type="PRO" id="PR:P14712"/>
<dbReference type="Proteomes" id="UP000006548">
    <property type="component" value="Chromosome 1"/>
</dbReference>
<dbReference type="ExpressionAtlas" id="P14712">
    <property type="expression patterns" value="baseline and differential"/>
</dbReference>
<dbReference type="GO" id="GO:0005737">
    <property type="term" value="C:cytoplasm"/>
    <property type="evidence" value="ECO:0000314"/>
    <property type="project" value="TAIR"/>
</dbReference>
<dbReference type="GO" id="GO:0016604">
    <property type="term" value="C:nuclear body"/>
    <property type="evidence" value="ECO:0000314"/>
    <property type="project" value="TAIR"/>
</dbReference>
<dbReference type="GO" id="GO:0016607">
    <property type="term" value="C:nuclear speck"/>
    <property type="evidence" value="ECO:0007669"/>
    <property type="project" value="UniProtKB-SubCell"/>
</dbReference>
<dbReference type="GO" id="GO:0005634">
    <property type="term" value="C:nucleus"/>
    <property type="evidence" value="ECO:0000314"/>
    <property type="project" value="TAIR"/>
</dbReference>
<dbReference type="GO" id="GO:0031516">
    <property type="term" value="F:far-red light photoreceptor activity"/>
    <property type="evidence" value="ECO:0000315"/>
    <property type="project" value="TAIR"/>
</dbReference>
<dbReference type="GO" id="GO:0042802">
    <property type="term" value="F:identical protein binding"/>
    <property type="evidence" value="ECO:0000353"/>
    <property type="project" value="IntAct"/>
</dbReference>
<dbReference type="GO" id="GO:0003729">
    <property type="term" value="F:mRNA binding"/>
    <property type="evidence" value="ECO:0007005"/>
    <property type="project" value="TAIR"/>
</dbReference>
<dbReference type="GO" id="GO:0000155">
    <property type="term" value="F:phosphorelay sensor kinase activity"/>
    <property type="evidence" value="ECO:0007669"/>
    <property type="project" value="InterPro"/>
</dbReference>
<dbReference type="GO" id="GO:0042803">
    <property type="term" value="F:protein homodimerization activity"/>
    <property type="evidence" value="ECO:0007669"/>
    <property type="project" value="InterPro"/>
</dbReference>
<dbReference type="GO" id="GO:0004672">
    <property type="term" value="F:protein kinase activity"/>
    <property type="evidence" value="ECO:0000314"/>
    <property type="project" value="UniProtKB"/>
</dbReference>
<dbReference type="GO" id="GO:0009883">
    <property type="term" value="F:red or far-red light photoreceptor activity"/>
    <property type="evidence" value="ECO:0000304"/>
    <property type="project" value="TAIR"/>
</dbReference>
<dbReference type="GO" id="GO:0009584">
    <property type="term" value="P:detection of visible light"/>
    <property type="evidence" value="ECO:0007669"/>
    <property type="project" value="InterPro"/>
</dbReference>
<dbReference type="GO" id="GO:0009630">
    <property type="term" value="P:gravitropism"/>
    <property type="evidence" value="ECO:0000315"/>
    <property type="project" value="TAIR"/>
</dbReference>
<dbReference type="GO" id="GO:0017148">
    <property type="term" value="P:negative regulation of translation"/>
    <property type="evidence" value="ECO:0000315"/>
    <property type="project" value="TAIR"/>
</dbReference>
<dbReference type="GO" id="GO:0009640">
    <property type="term" value="P:photomorphogenesis"/>
    <property type="evidence" value="ECO:0000315"/>
    <property type="project" value="TAIR"/>
</dbReference>
<dbReference type="GO" id="GO:0009638">
    <property type="term" value="P:phototropism"/>
    <property type="evidence" value="ECO:0000315"/>
    <property type="project" value="TAIR"/>
</dbReference>
<dbReference type="GO" id="GO:0010161">
    <property type="term" value="P:red light signaling pathway"/>
    <property type="evidence" value="ECO:0000315"/>
    <property type="project" value="TAIR"/>
</dbReference>
<dbReference type="GO" id="GO:0006355">
    <property type="term" value="P:regulation of DNA-templated transcription"/>
    <property type="evidence" value="ECO:0007669"/>
    <property type="project" value="InterPro"/>
</dbReference>
<dbReference type="GO" id="GO:0046685">
    <property type="term" value="P:response to arsenic-containing substance"/>
    <property type="evidence" value="ECO:0000315"/>
    <property type="project" value="TAIR"/>
</dbReference>
<dbReference type="GO" id="GO:0009409">
    <property type="term" value="P:response to cold"/>
    <property type="evidence" value="ECO:0000270"/>
    <property type="project" value="UniProtKB"/>
</dbReference>
<dbReference type="GO" id="GO:0010201">
    <property type="term" value="P:response to continuous far red light stimulus by the high-irradiance response system"/>
    <property type="evidence" value="ECO:0000315"/>
    <property type="project" value="TAIR"/>
</dbReference>
<dbReference type="GO" id="GO:0010218">
    <property type="term" value="P:response to far red light"/>
    <property type="evidence" value="ECO:0000314"/>
    <property type="project" value="UniProtKB"/>
</dbReference>
<dbReference type="GO" id="GO:0010203">
    <property type="term" value="P:response to very low fluence red light stimulus"/>
    <property type="evidence" value="ECO:0000315"/>
    <property type="project" value="TAIR"/>
</dbReference>
<dbReference type="CDD" id="cd16932">
    <property type="entry name" value="HATPase_Phy-like"/>
    <property type="match status" value="1"/>
</dbReference>
<dbReference type="CDD" id="cd00082">
    <property type="entry name" value="HisKA"/>
    <property type="match status" value="1"/>
</dbReference>
<dbReference type="CDD" id="cd00130">
    <property type="entry name" value="PAS"/>
    <property type="match status" value="2"/>
</dbReference>
<dbReference type="FunFam" id="3.30.450.20:FF:000039">
    <property type="entry name" value="Phytochrome"/>
    <property type="match status" value="1"/>
</dbReference>
<dbReference type="FunFam" id="3.30.450.270:FF:000001">
    <property type="entry name" value="Phytochrome"/>
    <property type="match status" value="1"/>
</dbReference>
<dbReference type="FunFam" id="3.30.565.10:FF:000125">
    <property type="entry name" value="Phytochrome"/>
    <property type="match status" value="1"/>
</dbReference>
<dbReference type="Gene3D" id="1.10.287.130">
    <property type="match status" value="1"/>
</dbReference>
<dbReference type="Gene3D" id="3.30.450.270">
    <property type="match status" value="1"/>
</dbReference>
<dbReference type="Gene3D" id="3.30.450.40">
    <property type="match status" value="1"/>
</dbReference>
<dbReference type="Gene3D" id="3.30.565.10">
    <property type="entry name" value="Histidine kinase-like ATPase, C-terminal domain"/>
    <property type="match status" value="1"/>
</dbReference>
<dbReference type="Gene3D" id="3.30.450.20">
    <property type="entry name" value="PAS domain"/>
    <property type="match status" value="3"/>
</dbReference>
<dbReference type="InterPro" id="IPR003018">
    <property type="entry name" value="GAF"/>
</dbReference>
<dbReference type="InterPro" id="IPR029016">
    <property type="entry name" value="GAF-like_dom_sf"/>
</dbReference>
<dbReference type="InterPro" id="IPR036890">
    <property type="entry name" value="HATPase_C_sf"/>
</dbReference>
<dbReference type="InterPro" id="IPR005467">
    <property type="entry name" value="His_kinase_dom"/>
</dbReference>
<dbReference type="InterPro" id="IPR003661">
    <property type="entry name" value="HisK_dim/P_dom"/>
</dbReference>
<dbReference type="InterPro" id="IPR000014">
    <property type="entry name" value="PAS"/>
</dbReference>
<dbReference type="InterPro" id="IPR035965">
    <property type="entry name" value="PAS-like_dom_sf"/>
</dbReference>
<dbReference type="InterPro" id="IPR013654">
    <property type="entry name" value="PAS_2"/>
</dbReference>
<dbReference type="InterPro" id="IPR013767">
    <property type="entry name" value="PAS_fold"/>
</dbReference>
<dbReference type="InterPro" id="IPR044767">
    <property type="entry name" value="Phy_HATPase-like"/>
</dbReference>
<dbReference type="InterPro" id="IPR016132">
    <property type="entry name" value="Phyto_chromo_attachment"/>
</dbReference>
<dbReference type="InterPro" id="IPR013516">
    <property type="entry name" value="Phyto_chromo_BS"/>
</dbReference>
<dbReference type="InterPro" id="IPR001294">
    <property type="entry name" value="Phytochrome"/>
</dbReference>
<dbReference type="InterPro" id="IPR012129">
    <property type="entry name" value="Phytochrome_A-E"/>
</dbReference>
<dbReference type="InterPro" id="IPR013515">
    <property type="entry name" value="Phytochrome_cen-reg"/>
</dbReference>
<dbReference type="InterPro" id="IPR043150">
    <property type="entry name" value="Phytochrome_PHY_sf"/>
</dbReference>
<dbReference type="NCBIfam" id="TIGR00229">
    <property type="entry name" value="sensory_box"/>
    <property type="match status" value="1"/>
</dbReference>
<dbReference type="PANTHER" id="PTHR47876">
    <property type="entry name" value="OS08G0260000 PROTEIN"/>
    <property type="match status" value="1"/>
</dbReference>
<dbReference type="PANTHER" id="PTHR47876:SF3">
    <property type="entry name" value="PHYTOCHROME 1"/>
    <property type="match status" value="1"/>
</dbReference>
<dbReference type="Pfam" id="PF01590">
    <property type="entry name" value="GAF"/>
    <property type="match status" value="1"/>
</dbReference>
<dbReference type="Pfam" id="PF02518">
    <property type="entry name" value="HATPase_c"/>
    <property type="match status" value="1"/>
</dbReference>
<dbReference type="Pfam" id="PF00512">
    <property type="entry name" value="HisKA"/>
    <property type="match status" value="1"/>
</dbReference>
<dbReference type="Pfam" id="PF00989">
    <property type="entry name" value="PAS"/>
    <property type="match status" value="2"/>
</dbReference>
<dbReference type="Pfam" id="PF08446">
    <property type="entry name" value="PAS_2"/>
    <property type="match status" value="1"/>
</dbReference>
<dbReference type="Pfam" id="PF00360">
    <property type="entry name" value="PHY"/>
    <property type="match status" value="1"/>
</dbReference>
<dbReference type="PIRSF" id="PIRSF000084">
    <property type="entry name" value="Phytochrome"/>
    <property type="match status" value="1"/>
</dbReference>
<dbReference type="PRINTS" id="PR01033">
    <property type="entry name" value="PHYTOCHROME"/>
</dbReference>
<dbReference type="SMART" id="SM00065">
    <property type="entry name" value="GAF"/>
    <property type="match status" value="1"/>
</dbReference>
<dbReference type="SMART" id="SM00387">
    <property type="entry name" value="HATPase_c"/>
    <property type="match status" value="1"/>
</dbReference>
<dbReference type="SMART" id="SM00388">
    <property type="entry name" value="HisKA"/>
    <property type="match status" value="1"/>
</dbReference>
<dbReference type="SMART" id="SM00091">
    <property type="entry name" value="PAS"/>
    <property type="match status" value="2"/>
</dbReference>
<dbReference type="SUPFAM" id="SSF55874">
    <property type="entry name" value="ATPase domain of HSP90 chaperone/DNA topoisomerase II/histidine kinase"/>
    <property type="match status" value="1"/>
</dbReference>
<dbReference type="SUPFAM" id="SSF55781">
    <property type="entry name" value="GAF domain-like"/>
    <property type="match status" value="2"/>
</dbReference>
<dbReference type="SUPFAM" id="SSF55785">
    <property type="entry name" value="PYP-like sensor domain (PAS domain)"/>
    <property type="match status" value="3"/>
</dbReference>
<dbReference type="PROSITE" id="PS50109">
    <property type="entry name" value="HIS_KIN"/>
    <property type="match status" value="1"/>
</dbReference>
<dbReference type="PROSITE" id="PS50112">
    <property type="entry name" value="PAS"/>
    <property type="match status" value="2"/>
</dbReference>
<dbReference type="PROSITE" id="PS00245">
    <property type="entry name" value="PHYTOCHROME_1"/>
    <property type="match status" value="1"/>
</dbReference>
<dbReference type="PROSITE" id="PS50046">
    <property type="entry name" value="PHYTOCHROME_2"/>
    <property type="match status" value="1"/>
</dbReference>